<accession>Q60309</accession>
<sequence length="286" mass="33271">MNFKKVSNMPDEIICNFYVNISYLEISATYDSKNKRYSLSSKTGNFNVGVKGFEKLLSIFEKIGHVMKINEKTYKIIIQNKILNLKHLYSKKNKTHTLEILDEYNNLMKLSGKKLIDVALQLFKTFKINENIENSLNVKKTENDIQIINNNQNLKIEENINDSKTKENDNKCYREIIDRVLKSRSEQLFIENLENIPPKSVIYSITGAFSFIFGLGVLCETLESGKIRWKAIILGFIILILILAIVNYLMMKEKNVDEHEYNIPTKLMEDVYTTDCENFPCGYFPK</sequence>
<gene>
    <name type="ordered locus">MJECS10</name>
</gene>
<feature type="chain" id="PRO_0000107491" description="Uncharacterized protein MJECS10">
    <location>
        <begin position="1"/>
        <end position="286"/>
    </location>
</feature>
<feature type="transmembrane region" description="Helical" evidence="1">
    <location>
        <begin position="201"/>
        <end position="221"/>
    </location>
</feature>
<feature type="transmembrane region" description="Helical" evidence="1">
    <location>
        <begin position="231"/>
        <end position="251"/>
    </location>
</feature>
<organism>
    <name type="scientific">Methanocaldococcus jannaschii (strain ATCC 43067 / DSM 2661 / JAL-1 / JCM 10045 / NBRC 100440)</name>
    <name type="common">Methanococcus jannaschii</name>
    <dbReference type="NCBI Taxonomy" id="243232"/>
    <lineage>
        <taxon>Archaea</taxon>
        <taxon>Methanobacteriati</taxon>
        <taxon>Methanobacteriota</taxon>
        <taxon>Methanomada group</taxon>
        <taxon>Methanococci</taxon>
        <taxon>Methanococcales</taxon>
        <taxon>Methanocaldococcaceae</taxon>
        <taxon>Methanocaldococcus</taxon>
    </lineage>
</organism>
<comment type="subcellular location">
    <subcellularLocation>
        <location evidence="2">Cell membrane</location>
        <topology evidence="2">Multi-pass membrane protein</topology>
    </subcellularLocation>
</comment>
<keyword id="KW-1003">Cell membrane</keyword>
<keyword id="KW-0472">Membrane</keyword>
<keyword id="KW-0614">Plasmid</keyword>
<keyword id="KW-1185">Reference proteome</keyword>
<keyword id="KW-0812">Transmembrane</keyword>
<keyword id="KW-1133">Transmembrane helix</keyword>
<protein>
    <recommendedName>
        <fullName>Uncharacterized protein MJECS10</fullName>
    </recommendedName>
</protein>
<reference key="1">
    <citation type="journal article" date="1996" name="Science">
        <title>Complete genome sequence of the methanogenic archaeon, Methanococcus jannaschii.</title>
        <authorList>
            <person name="Bult C.J."/>
            <person name="White O."/>
            <person name="Olsen G.J."/>
            <person name="Zhou L."/>
            <person name="Fleischmann R.D."/>
            <person name="Sutton G.G."/>
            <person name="Blake J.A."/>
            <person name="FitzGerald L.M."/>
            <person name="Clayton R.A."/>
            <person name="Gocayne J.D."/>
            <person name="Kerlavage A.R."/>
            <person name="Dougherty B.A."/>
            <person name="Tomb J.-F."/>
            <person name="Adams M.D."/>
            <person name="Reich C.I."/>
            <person name="Overbeek R."/>
            <person name="Kirkness E.F."/>
            <person name="Weinstock K.G."/>
            <person name="Merrick J.M."/>
            <person name="Glodek A."/>
            <person name="Scott J.L."/>
            <person name="Geoghagen N.S.M."/>
            <person name="Weidman J.F."/>
            <person name="Fuhrmann J.L."/>
            <person name="Nguyen D."/>
            <person name="Utterback T.R."/>
            <person name="Kelley J.M."/>
            <person name="Peterson J.D."/>
            <person name="Sadow P.W."/>
            <person name="Hanna M.C."/>
            <person name="Cotton M.D."/>
            <person name="Roberts K.M."/>
            <person name="Hurst M.A."/>
            <person name="Kaine B.P."/>
            <person name="Borodovsky M."/>
            <person name="Klenk H.-P."/>
            <person name="Fraser C.M."/>
            <person name="Smith H.O."/>
            <person name="Woese C.R."/>
            <person name="Venter J.C."/>
        </authorList>
    </citation>
    <scope>NUCLEOTIDE SEQUENCE [LARGE SCALE GENOMIC DNA]</scope>
    <source>
        <strain>ATCC 43067 / DSM 2661 / JAL-1 / JCM 10045 / NBRC 100440</strain>
    </source>
</reference>
<evidence type="ECO:0000255" key="1"/>
<evidence type="ECO:0000305" key="2"/>
<proteinExistence type="predicted"/>
<name>Y3410_METJA</name>
<geneLocation type="plasmid">
    <name>small ECE</name>
</geneLocation>
<dbReference type="EMBL" id="L77119">
    <property type="protein sequence ID" value="AAC37068.1"/>
    <property type="molecule type" value="Genomic_DNA"/>
</dbReference>
<dbReference type="PIR" id="B64517">
    <property type="entry name" value="B64517"/>
</dbReference>
<dbReference type="PaxDb" id="243232-MJ_ECS10"/>
<dbReference type="EnsemblBacteria" id="AAC37068">
    <property type="protein sequence ID" value="AAC37068"/>
    <property type="gene ID" value="MJ_ECS10"/>
</dbReference>
<dbReference type="KEGG" id="mja:MJ_ECS10"/>
<dbReference type="HOGENOM" id="CLU_971851_0_0_2"/>
<dbReference type="InParanoid" id="Q60309"/>
<dbReference type="Proteomes" id="UP000000805">
    <property type="component" value="Plasmid pDSM2661_2"/>
</dbReference>
<dbReference type="GO" id="GO:0005886">
    <property type="term" value="C:plasma membrane"/>
    <property type="evidence" value="ECO:0007669"/>
    <property type="project" value="UniProtKB-SubCell"/>
</dbReference>